<organism>
    <name type="scientific">Penaeus paulensis</name>
    <name type="common">Pink shrimp</name>
    <name type="synonym">Farfantepenaeus paulensis</name>
    <dbReference type="NCBI Taxonomy" id="71413"/>
    <lineage>
        <taxon>Eukaryota</taxon>
        <taxon>Metazoa</taxon>
        <taxon>Ecdysozoa</taxon>
        <taxon>Arthropoda</taxon>
        <taxon>Crustacea</taxon>
        <taxon>Multicrustacea</taxon>
        <taxon>Malacostraca</taxon>
        <taxon>Eumalacostraca</taxon>
        <taxon>Eucarida</taxon>
        <taxon>Decapoda</taxon>
        <taxon>Dendrobranchiata</taxon>
        <taxon>Penaeoidea</taxon>
        <taxon>Penaeidae</taxon>
        <taxon>Penaeus</taxon>
    </lineage>
</organism>
<keyword id="KW-0903">Direct protein sequencing</keyword>
<keyword id="KW-1015">Disulfide bond</keyword>
<keyword id="KW-0325">Glycoprotein</keyword>
<keyword id="KW-0353">Hemolymph clotting</keyword>
<keyword id="KW-0964">Secreted</keyword>
<feature type="chain" id="PRO_0000249179" description="Hemolymph clottable protein">
    <location>
        <begin position="1"/>
        <end position="15" status="greater than"/>
    </location>
</feature>
<feature type="non-terminal residue" evidence="3">
    <location>
        <position position="15"/>
    </location>
</feature>
<proteinExistence type="evidence at protein level"/>
<protein>
    <recommendedName>
        <fullName>Hemolymph clottable protein</fullName>
    </recommendedName>
    <alternativeName>
        <fullName>Clotting protein</fullName>
        <shortName>CP</shortName>
    </alternativeName>
</protein>
<reference evidence="4" key="1">
    <citation type="journal article" date="2005" name="Comp. Biochem. Physiol.">
        <title>Purification and partial characterization of the plasma clotting protein from the pink shrimp Farfantepenaeus paulensis.</title>
        <authorList>
            <person name="Perazzolo L.M."/>
            <person name="Lorenzini D.M."/>
            <person name="Daffre S."/>
            <person name="Barracco M.A."/>
        </authorList>
    </citation>
    <scope>PROTEIN SEQUENCE</scope>
    <scope>FUNCTION</scope>
    <scope>SUBCELLULAR LOCATION</scope>
    <scope>TISSUE SPECIFICITY</scope>
    <source>
        <tissue evidence="2">Hemolymph</tissue>
    </source>
</reference>
<evidence type="ECO:0000250" key="1">
    <source>
        <dbReference type="UniProtKB" id="Q9U572"/>
    </source>
</evidence>
<evidence type="ECO:0000269" key="2">
    <source>
    </source>
</evidence>
<evidence type="ECO:0000303" key="3">
    <source>
    </source>
</evidence>
<evidence type="ECO:0000305" key="4"/>
<accession>P84913</accession>
<comment type="function">
    <text evidence="2">Forms stable clots in the presence of calcium.</text>
</comment>
<comment type="subunit">
    <text evidence="1">Homodimer; disulfide-linked. Also exists as oligomers.</text>
</comment>
<comment type="subcellular location">
    <subcellularLocation>
        <location evidence="2">Secreted</location>
        <location evidence="2">Extracellular space</location>
    </subcellularLocation>
</comment>
<comment type="tissue specificity">
    <text evidence="2">Hemolymph.</text>
</comment>
<comment type="PTM">
    <text evidence="1">Glycosylated. Contains mannose and N-acetylglucosamine.</text>
</comment>
<sequence length="15" mass="1843">LQPGLEYQYRYSARV</sequence>
<name>CLOT_PENPU</name>
<dbReference type="GO" id="GO:0005615">
    <property type="term" value="C:extracellular space"/>
    <property type="evidence" value="ECO:0000314"/>
    <property type="project" value="UniProtKB"/>
</dbReference>
<dbReference type="GO" id="GO:0042381">
    <property type="term" value="P:hemolymph coagulation"/>
    <property type="evidence" value="ECO:0000314"/>
    <property type="project" value="UniProtKB"/>
</dbReference>